<feature type="chain" id="PRO_1000204796" description="Potassium-transporting ATPase KdpC subunit">
    <location>
        <begin position="1"/>
        <end position="193"/>
    </location>
</feature>
<feature type="transmembrane region" description="Helical" evidence="1">
    <location>
        <begin position="7"/>
        <end position="27"/>
    </location>
</feature>
<accession>C5CPD2</accession>
<evidence type="ECO:0000255" key="1">
    <source>
        <dbReference type="HAMAP-Rule" id="MF_00276"/>
    </source>
</evidence>
<organism>
    <name type="scientific">Variovorax paradoxus (strain S110)</name>
    <dbReference type="NCBI Taxonomy" id="543728"/>
    <lineage>
        <taxon>Bacteria</taxon>
        <taxon>Pseudomonadati</taxon>
        <taxon>Pseudomonadota</taxon>
        <taxon>Betaproteobacteria</taxon>
        <taxon>Burkholderiales</taxon>
        <taxon>Comamonadaceae</taxon>
        <taxon>Variovorax</taxon>
    </lineage>
</organism>
<reference key="1">
    <citation type="journal article" date="2011" name="J. Bacteriol.">
        <title>Complete genome sequence of the metabolically versatile plant growth-promoting endophyte, Variovorax paradoxus S110.</title>
        <authorList>
            <person name="Han J.I."/>
            <person name="Choi H.K."/>
            <person name="Lee S.W."/>
            <person name="Orwin P.M."/>
            <person name="Kim J."/>
            <person name="Laroe S.L."/>
            <person name="Kim T.G."/>
            <person name="O'Neil J."/>
            <person name="Leadbetter J.R."/>
            <person name="Lee S.Y."/>
            <person name="Hur C.G."/>
            <person name="Spain J.C."/>
            <person name="Ovchinnikova G."/>
            <person name="Goodwin L."/>
            <person name="Han C."/>
        </authorList>
    </citation>
    <scope>NUCLEOTIDE SEQUENCE [LARGE SCALE GENOMIC DNA]</scope>
    <source>
        <strain>S110</strain>
    </source>
</reference>
<proteinExistence type="inferred from homology"/>
<keyword id="KW-0067">ATP-binding</keyword>
<keyword id="KW-0997">Cell inner membrane</keyword>
<keyword id="KW-1003">Cell membrane</keyword>
<keyword id="KW-0406">Ion transport</keyword>
<keyword id="KW-0472">Membrane</keyword>
<keyword id="KW-0547">Nucleotide-binding</keyword>
<keyword id="KW-0630">Potassium</keyword>
<keyword id="KW-0633">Potassium transport</keyword>
<keyword id="KW-0812">Transmembrane</keyword>
<keyword id="KW-1133">Transmembrane helix</keyword>
<keyword id="KW-0813">Transport</keyword>
<sequence>MNNVIRPALVLFALLSALTGLAYPLAVTGAAKALFPSQAAGSLVVQGGTTVGSSLIGQNFGDPKHFWGRPSATAPQPYNASASGGSNLGPLNPALADAVKQRIEALRAADPGNAAAVPVDLVTASASGLDPDISPAAAHYQAARVARLRGLPPEQVNALVASHTQAPLWGWLGEPRVNVLALNLALDASAAAR</sequence>
<comment type="function">
    <text evidence="1">Part of the high-affinity ATP-driven potassium transport (or Kdp) system, which catalyzes the hydrolysis of ATP coupled with the electrogenic transport of potassium into the cytoplasm. This subunit acts as a catalytic chaperone that increases the ATP-binding affinity of the ATP-hydrolyzing subunit KdpB by the formation of a transient KdpB/KdpC/ATP ternary complex.</text>
</comment>
<comment type="subunit">
    <text evidence="1">The system is composed of three essential subunits: KdpA, KdpB and KdpC.</text>
</comment>
<comment type="subcellular location">
    <subcellularLocation>
        <location evidence="1">Cell inner membrane</location>
        <topology evidence="1">Single-pass membrane protein</topology>
    </subcellularLocation>
</comment>
<comment type="similarity">
    <text evidence="1">Belongs to the KdpC family.</text>
</comment>
<dbReference type="EMBL" id="CP001635">
    <property type="protein sequence ID" value="ACS21596.1"/>
    <property type="molecule type" value="Genomic_DNA"/>
</dbReference>
<dbReference type="SMR" id="C5CPD2"/>
<dbReference type="STRING" id="543728.Vapar_4993"/>
<dbReference type="KEGG" id="vap:Vapar_4993"/>
<dbReference type="eggNOG" id="COG2156">
    <property type="taxonomic scope" value="Bacteria"/>
</dbReference>
<dbReference type="HOGENOM" id="CLU_077094_2_0_4"/>
<dbReference type="OrthoDB" id="9788285at2"/>
<dbReference type="GO" id="GO:0005886">
    <property type="term" value="C:plasma membrane"/>
    <property type="evidence" value="ECO:0007669"/>
    <property type="project" value="UniProtKB-SubCell"/>
</dbReference>
<dbReference type="GO" id="GO:0005524">
    <property type="term" value="F:ATP binding"/>
    <property type="evidence" value="ECO:0007669"/>
    <property type="project" value="UniProtKB-UniRule"/>
</dbReference>
<dbReference type="GO" id="GO:0008556">
    <property type="term" value="F:P-type potassium transmembrane transporter activity"/>
    <property type="evidence" value="ECO:0007669"/>
    <property type="project" value="InterPro"/>
</dbReference>
<dbReference type="HAMAP" id="MF_00276">
    <property type="entry name" value="KdpC"/>
    <property type="match status" value="1"/>
</dbReference>
<dbReference type="InterPro" id="IPR003820">
    <property type="entry name" value="KdpC"/>
</dbReference>
<dbReference type="NCBIfam" id="TIGR00681">
    <property type="entry name" value="kdpC"/>
    <property type="match status" value="1"/>
</dbReference>
<dbReference type="NCBIfam" id="NF001454">
    <property type="entry name" value="PRK00315.1"/>
    <property type="match status" value="1"/>
</dbReference>
<dbReference type="PANTHER" id="PTHR30042">
    <property type="entry name" value="POTASSIUM-TRANSPORTING ATPASE C CHAIN"/>
    <property type="match status" value="1"/>
</dbReference>
<dbReference type="PANTHER" id="PTHR30042:SF2">
    <property type="entry name" value="POTASSIUM-TRANSPORTING ATPASE KDPC SUBUNIT"/>
    <property type="match status" value="1"/>
</dbReference>
<dbReference type="Pfam" id="PF02669">
    <property type="entry name" value="KdpC"/>
    <property type="match status" value="1"/>
</dbReference>
<dbReference type="PIRSF" id="PIRSF001296">
    <property type="entry name" value="K_ATPase_KdpC"/>
    <property type="match status" value="1"/>
</dbReference>
<name>KDPC_VARPS</name>
<protein>
    <recommendedName>
        <fullName evidence="1">Potassium-transporting ATPase KdpC subunit</fullName>
    </recommendedName>
    <alternativeName>
        <fullName evidence="1">ATP phosphohydrolase [potassium-transporting] C chain</fullName>
    </alternativeName>
    <alternativeName>
        <fullName evidence="1">Potassium-binding and translocating subunit C</fullName>
    </alternativeName>
    <alternativeName>
        <fullName evidence="1">Potassium-translocating ATPase C chain</fullName>
    </alternativeName>
</protein>
<gene>
    <name evidence="1" type="primary">kdpC</name>
    <name type="ordered locus">Vapar_4993</name>
</gene>